<protein>
    <recommendedName>
        <fullName evidence="1">Membrane-bound lytic murein transglycosylase F</fullName>
        <ecNumber evidence="1">4.2.2.n1</ecNumber>
    </recommendedName>
    <alternativeName>
        <fullName evidence="1">Murein lyase F</fullName>
    </alternativeName>
</protein>
<feature type="signal peptide" evidence="1">
    <location>
        <begin position="1"/>
        <end position="21"/>
    </location>
</feature>
<feature type="chain" id="PRO_0000353932" description="Membrane-bound lytic murein transglycosylase F">
    <location>
        <begin position="22"/>
        <end position="518"/>
    </location>
</feature>
<feature type="region of interest" description="Non-LT domain" evidence="1">
    <location>
        <begin position="22"/>
        <end position="269"/>
    </location>
</feature>
<feature type="region of interest" description="LT domain" evidence="1">
    <location>
        <begin position="270"/>
        <end position="518"/>
    </location>
</feature>
<feature type="active site" evidence="1">
    <location>
        <position position="314"/>
    </location>
</feature>
<name>MLTF_ECOL5</name>
<proteinExistence type="inferred from homology"/>
<dbReference type="EC" id="4.2.2.n1" evidence="1"/>
<dbReference type="EMBL" id="CP000247">
    <property type="protein sequence ID" value="ABG70549.1"/>
    <property type="molecule type" value="Genomic_DNA"/>
</dbReference>
<dbReference type="RefSeq" id="WP_000734193.1">
    <property type="nucleotide sequence ID" value="NC_008253.1"/>
</dbReference>
<dbReference type="SMR" id="Q0TET0"/>
<dbReference type="CAZy" id="GH23">
    <property type="family name" value="Glycoside Hydrolase Family 23"/>
</dbReference>
<dbReference type="KEGG" id="ecp:ECP_2560"/>
<dbReference type="HOGENOM" id="CLU_027494_0_1_6"/>
<dbReference type="Proteomes" id="UP000009182">
    <property type="component" value="Chromosome"/>
</dbReference>
<dbReference type="GO" id="GO:0009279">
    <property type="term" value="C:cell outer membrane"/>
    <property type="evidence" value="ECO:0007669"/>
    <property type="project" value="UniProtKB-SubCell"/>
</dbReference>
<dbReference type="GO" id="GO:0008933">
    <property type="term" value="F:peptidoglycan lytic transglycosylase activity"/>
    <property type="evidence" value="ECO:0007669"/>
    <property type="project" value="UniProtKB-UniRule"/>
</dbReference>
<dbReference type="GO" id="GO:0016998">
    <property type="term" value="P:cell wall macromolecule catabolic process"/>
    <property type="evidence" value="ECO:0007669"/>
    <property type="project" value="UniProtKB-UniRule"/>
</dbReference>
<dbReference type="GO" id="GO:0071555">
    <property type="term" value="P:cell wall organization"/>
    <property type="evidence" value="ECO:0007669"/>
    <property type="project" value="UniProtKB-KW"/>
</dbReference>
<dbReference type="GO" id="GO:0009253">
    <property type="term" value="P:peptidoglycan catabolic process"/>
    <property type="evidence" value="ECO:0007669"/>
    <property type="project" value="TreeGrafter"/>
</dbReference>
<dbReference type="CDD" id="cd13403">
    <property type="entry name" value="MLTF-like"/>
    <property type="match status" value="1"/>
</dbReference>
<dbReference type="CDD" id="cd01009">
    <property type="entry name" value="PBP2_YfhD_N"/>
    <property type="match status" value="1"/>
</dbReference>
<dbReference type="FunFam" id="1.10.530.10:FF:000003">
    <property type="entry name" value="Membrane-bound lytic murein transglycosylase F"/>
    <property type="match status" value="1"/>
</dbReference>
<dbReference type="FunFam" id="3.40.190.10:FF:000051">
    <property type="entry name" value="Membrane-bound lytic murein transglycosylase F"/>
    <property type="match status" value="1"/>
</dbReference>
<dbReference type="Gene3D" id="1.10.530.10">
    <property type="match status" value="1"/>
</dbReference>
<dbReference type="Gene3D" id="3.40.190.10">
    <property type="entry name" value="Periplasmic binding protein-like II"/>
    <property type="match status" value="2"/>
</dbReference>
<dbReference type="HAMAP" id="MF_02016">
    <property type="entry name" value="MltF"/>
    <property type="match status" value="1"/>
</dbReference>
<dbReference type="InterPro" id="IPR023346">
    <property type="entry name" value="Lysozyme-like_dom_sf"/>
</dbReference>
<dbReference type="InterPro" id="IPR023703">
    <property type="entry name" value="MltF"/>
</dbReference>
<dbReference type="InterPro" id="IPR001638">
    <property type="entry name" value="Solute-binding_3/MltF_N"/>
</dbReference>
<dbReference type="InterPro" id="IPR000189">
    <property type="entry name" value="Transglyc_AS"/>
</dbReference>
<dbReference type="InterPro" id="IPR008258">
    <property type="entry name" value="Transglycosylase_SLT_dom_1"/>
</dbReference>
<dbReference type="NCBIfam" id="NF008112">
    <property type="entry name" value="PRK10859.1"/>
    <property type="match status" value="1"/>
</dbReference>
<dbReference type="PANTHER" id="PTHR35936">
    <property type="entry name" value="MEMBRANE-BOUND LYTIC MUREIN TRANSGLYCOSYLASE F"/>
    <property type="match status" value="1"/>
</dbReference>
<dbReference type="PANTHER" id="PTHR35936:SF32">
    <property type="entry name" value="MEMBRANE-BOUND LYTIC MUREIN TRANSGLYCOSYLASE F"/>
    <property type="match status" value="1"/>
</dbReference>
<dbReference type="Pfam" id="PF00497">
    <property type="entry name" value="SBP_bac_3"/>
    <property type="match status" value="1"/>
</dbReference>
<dbReference type="Pfam" id="PF01464">
    <property type="entry name" value="SLT"/>
    <property type="match status" value="1"/>
</dbReference>
<dbReference type="SMART" id="SM00062">
    <property type="entry name" value="PBPb"/>
    <property type="match status" value="1"/>
</dbReference>
<dbReference type="SUPFAM" id="SSF53955">
    <property type="entry name" value="Lysozyme-like"/>
    <property type="match status" value="1"/>
</dbReference>
<dbReference type="SUPFAM" id="SSF53850">
    <property type="entry name" value="Periplasmic binding protein-like II"/>
    <property type="match status" value="1"/>
</dbReference>
<dbReference type="PROSITE" id="PS00922">
    <property type="entry name" value="TRANSGLYCOSYLASE"/>
    <property type="match status" value="1"/>
</dbReference>
<comment type="function">
    <text evidence="1">Murein-degrading enzyme that degrades murein glycan strands and insoluble, high-molecular weight murein sacculi, with the concomitant formation of a 1,6-anhydromuramoyl product. Lytic transglycosylases (LTs) play an integral role in the metabolism of the peptidoglycan (PG) sacculus. Their lytic action creates space within the PG sacculus to allow for its expansion as well as for the insertion of various structures such as secretion systems and flagella.</text>
</comment>
<comment type="catalytic activity">
    <reaction evidence="1">
        <text>Exolytic cleavage of the (1-&gt;4)-beta-glycosidic linkage between N-acetylmuramic acid (MurNAc) and N-acetylglucosamine (GlcNAc) residues in peptidoglycan, from either the reducing or the non-reducing ends of the peptidoglycan chains, with concomitant formation of a 1,6-anhydrobond in the MurNAc residue.</text>
        <dbReference type="EC" id="4.2.2.n1"/>
    </reaction>
</comment>
<comment type="subcellular location">
    <subcellularLocation>
        <location>Cell outer membrane</location>
        <topology>Peripheral membrane protein</topology>
    </subcellularLocation>
    <text evidence="1">Attached to the inner leaflet of the outer membrane.</text>
</comment>
<comment type="domain">
    <text evidence="1">The N-terminal domain does not have lytic activity and probably modulates enzymatic activity. The C-terminal domain is the catalytic active domain.</text>
</comment>
<comment type="similarity">
    <text evidence="1">In the N-terminal section; belongs to the bacterial solute-binding protein 3 family.</text>
</comment>
<comment type="similarity">
    <text evidence="1">In the C-terminal section; belongs to the transglycosylase Slt family.</text>
</comment>
<evidence type="ECO:0000255" key="1">
    <source>
        <dbReference type="HAMAP-Rule" id="MF_02016"/>
    </source>
</evidence>
<keyword id="KW-0998">Cell outer membrane</keyword>
<keyword id="KW-0961">Cell wall biogenesis/degradation</keyword>
<keyword id="KW-0456">Lyase</keyword>
<keyword id="KW-0472">Membrane</keyword>
<keyword id="KW-0732">Signal</keyword>
<sequence>MKKLKINYLFIGILALLLAVALWPSIPWFGKADNRIAAIQARGELRVSTIHTPLTYNEINGKPFGLDYELAKQFADYLGVKLKVTVRQNISQLFDDLDNGNADLLAAGLVYNSERVKNYQPGPTYYSVSQQLVYKVGQYRPRTLGNLTAEQLTVAPGHVVVNDLQTLKDTKFPELSWKVDDKKGSAELMEDVIEGKLDYTIADSVAISLFQRVHPELAVALDITDEQPVTWFSPLDGDNTLSAALLDFFNEMNEDGTLARIEEKYLGHGDDFDYVDTRTFLRAVDAVLPQLKPLFEKYAEEIDWRLLAAIAYQESHWDAQATSPTGVRGMMMLTKNTAQSLGITDRTDAEQSISGGVRYLQDMMSKVPESVPENERIWFALAAYNMGYAHMLDARALTAKTKGNPDSWADVKQRLPLLSQKPYYSKLTYGYARGHEAYAYVENIRKYQISLVGYLQEKEKQATEAAMQLAQDYPAVSPTELGKEKFPFLSFLSQSSSNYLTHSPSLLFSRKGSEEKQN</sequence>
<reference key="1">
    <citation type="journal article" date="2006" name="Mol. Microbiol.">
        <title>Role of pathogenicity island-associated integrases in the genome plasticity of uropathogenic Escherichia coli strain 536.</title>
        <authorList>
            <person name="Hochhut B."/>
            <person name="Wilde C."/>
            <person name="Balling G."/>
            <person name="Middendorf B."/>
            <person name="Dobrindt U."/>
            <person name="Brzuszkiewicz E."/>
            <person name="Gottschalk G."/>
            <person name="Carniel E."/>
            <person name="Hacker J."/>
        </authorList>
    </citation>
    <scope>NUCLEOTIDE SEQUENCE [LARGE SCALE GENOMIC DNA]</scope>
    <source>
        <strain>536 / UPEC</strain>
    </source>
</reference>
<gene>
    <name evidence="1" type="primary">mltF</name>
    <name type="ordered locus">ECP_2560</name>
</gene>
<accession>Q0TET0</accession>
<organism>
    <name type="scientific">Escherichia coli O6:K15:H31 (strain 536 / UPEC)</name>
    <dbReference type="NCBI Taxonomy" id="362663"/>
    <lineage>
        <taxon>Bacteria</taxon>
        <taxon>Pseudomonadati</taxon>
        <taxon>Pseudomonadota</taxon>
        <taxon>Gammaproteobacteria</taxon>
        <taxon>Enterobacterales</taxon>
        <taxon>Enterobacteriaceae</taxon>
        <taxon>Escherichia</taxon>
    </lineage>
</organism>